<organism>
    <name type="scientific">Mycoplasmopsis agalactiae (strain NCTC 10123 / CIP 59.7 / PG2)</name>
    <name type="common">Mycoplasma agalactiae</name>
    <dbReference type="NCBI Taxonomy" id="347257"/>
    <lineage>
        <taxon>Bacteria</taxon>
        <taxon>Bacillati</taxon>
        <taxon>Mycoplasmatota</taxon>
        <taxon>Mycoplasmoidales</taxon>
        <taxon>Metamycoplasmataceae</taxon>
        <taxon>Mycoplasmopsis</taxon>
    </lineage>
</organism>
<sequence length="122" mass="13214">MVLELSKLNVADNSGAKEVGVIRVLGGSRKKTANIGDVIICSVKKAIPTGIVKEGQVVKAVIVRSVYGIHRENGQHIRFDDNAVVIIKDDKTPRGTRVFGPVARELRDKGYLKIVSLAPEVL</sequence>
<feature type="chain" id="PRO_1000144300" description="Large ribosomal subunit protein uL14">
    <location>
        <begin position="1"/>
        <end position="122"/>
    </location>
</feature>
<gene>
    <name evidence="1" type="primary">rplN</name>
    <name type="ordered locus">MAG5370</name>
</gene>
<proteinExistence type="inferred from homology"/>
<dbReference type="EMBL" id="CU179680">
    <property type="protein sequence ID" value="CAL59235.1"/>
    <property type="molecule type" value="Genomic_DNA"/>
</dbReference>
<dbReference type="RefSeq" id="WP_004023950.1">
    <property type="nucleotide sequence ID" value="NC_009497.1"/>
</dbReference>
<dbReference type="SMR" id="A5IYX6"/>
<dbReference type="STRING" id="347257.MAG5370"/>
<dbReference type="GeneID" id="93358280"/>
<dbReference type="KEGG" id="maa:MAG5370"/>
<dbReference type="HOGENOM" id="CLU_095071_2_1_14"/>
<dbReference type="Proteomes" id="UP000007065">
    <property type="component" value="Chromosome"/>
</dbReference>
<dbReference type="GO" id="GO:0022625">
    <property type="term" value="C:cytosolic large ribosomal subunit"/>
    <property type="evidence" value="ECO:0007669"/>
    <property type="project" value="TreeGrafter"/>
</dbReference>
<dbReference type="GO" id="GO:0070180">
    <property type="term" value="F:large ribosomal subunit rRNA binding"/>
    <property type="evidence" value="ECO:0007669"/>
    <property type="project" value="TreeGrafter"/>
</dbReference>
<dbReference type="GO" id="GO:0003735">
    <property type="term" value="F:structural constituent of ribosome"/>
    <property type="evidence" value="ECO:0007669"/>
    <property type="project" value="InterPro"/>
</dbReference>
<dbReference type="GO" id="GO:0006412">
    <property type="term" value="P:translation"/>
    <property type="evidence" value="ECO:0007669"/>
    <property type="project" value="UniProtKB-UniRule"/>
</dbReference>
<dbReference type="CDD" id="cd00337">
    <property type="entry name" value="Ribosomal_uL14"/>
    <property type="match status" value="1"/>
</dbReference>
<dbReference type="Gene3D" id="2.40.150.20">
    <property type="entry name" value="Ribosomal protein L14"/>
    <property type="match status" value="1"/>
</dbReference>
<dbReference type="HAMAP" id="MF_01367">
    <property type="entry name" value="Ribosomal_uL14"/>
    <property type="match status" value="1"/>
</dbReference>
<dbReference type="InterPro" id="IPR000218">
    <property type="entry name" value="Ribosomal_uL14"/>
</dbReference>
<dbReference type="InterPro" id="IPR005745">
    <property type="entry name" value="Ribosomal_uL14_bac-type"/>
</dbReference>
<dbReference type="InterPro" id="IPR019972">
    <property type="entry name" value="Ribosomal_uL14_CS"/>
</dbReference>
<dbReference type="InterPro" id="IPR036853">
    <property type="entry name" value="Ribosomal_uL14_sf"/>
</dbReference>
<dbReference type="NCBIfam" id="TIGR01067">
    <property type="entry name" value="rplN_bact"/>
    <property type="match status" value="1"/>
</dbReference>
<dbReference type="PANTHER" id="PTHR11761">
    <property type="entry name" value="50S/60S RIBOSOMAL PROTEIN L14/L23"/>
    <property type="match status" value="1"/>
</dbReference>
<dbReference type="PANTHER" id="PTHR11761:SF3">
    <property type="entry name" value="LARGE RIBOSOMAL SUBUNIT PROTEIN UL14M"/>
    <property type="match status" value="1"/>
</dbReference>
<dbReference type="Pfam" id="PF00238">
    <property type="entry name" value="Ribosomal_L14"/>
    <property type="match status" value="1"/>
</dbReference>
<dbReference type="SMART" id="SM01374">
    <property type="entry name" value="Ribosomal_L14"/>
    <property type="match status" value="1"/>
</dbReference>
<dbReference type="SUPFAM" id="SSF50193">
    <property type="entry name" value="Ribosomal protein L14"/>
    <property type="match status" value="1"/>
</dbReference>
<dbReference type="PROSITE" id="PS00049">
    <property type="entry name" value="RIBOSOMAL_L14"/>
    <property type="match status" value="1"/>
</dbReference>
<evidence type="ECO:0000255" key="1">
    <source>
        <dbReference type="HAMAP-Rule" id="MF_01367"/>
    </source>
</evidence>
<evidence type="ECO:0000305" key="2"/>
<name>RL14_MYCAP</name>
<comment type="function">
    <text evidence="1">Binds to 23S rRNA. Forms part of two intersubunit bridges in the 70S ribosome.</text>
</comment>
<comment type="subunit">
    <text evidence="1">Part of the 50S ribosomal subunit. Forms a cluster with proteins L3 and L19. In the 70S ribosome, L14 and L19 interact and together make contacts with the 16S rRNA in bridges B5 and B8.</text>
</comment>
<comment type="similarity">
    <text evidence="1">Belongs to the universal ribosomal protein uL14 family.</text>
</comment>
<keyword id="KW-1185">Reference proteome</keyword>
<keyword id="KW-0687">Ribonucleoprotein</keyword>
<keyword id="KW-0689">Ribosomal protein</keyword>
<keyword id="KW-0694">RNA-binding</keyword>
<keyword id="KW-0699">rRNA-binding</keyword>
<reference key="1">
    <citation type="journal article" date="2007" name="PLoS Genet.">
        <title>Being pathogenic, plastic, and sexual while living with a nearly minimal bacterial genome.</title>
        <authorList>
            <person name="Sirand-Pugnet P."/>
            <person name="Lartigue C."/>
            <person name="Marenda M."/>
            <person name="Jacob D."/>
            <person name="Barre A."/>
            <person name="Barbe V."/>
            <person name="Schenowitz C."/>
            <person name="Mangenot S."/>
            <person name="Couloux A."/>
            <person name="Segurens B."/>
            <person name="de Daruvar A."/>
            <person name="Blanchard A."/>
            <person name="Citti C."/>
        </authorList>
    </citation>
    <scope>NUCLEOTIDE SEQUENCE [LARGE SCALE GENOMIC DNA]</scope>
    <source>
        <strain>NCTC 10123 / CIP 59.7 / PG2</strain>
    </source>
</reference>
<accession>A5IYX6</accession>
<protein>
    <recommendedName>
        <fullName evidence="1">Large ribosomal subunit protein uL14</fullName>
    </recommendedName>
    <alternativeName>
        <fullName evidence="2">50S ribosomal protein L14</fullName>
    </alternativeName>
</protein>